<gene>
    <name evidence="12" type="primary">ATP8B3</name>
    <name type="synonym">ATP1K</name>
    <name type="synonym">FOS37502_2</name>
</gene>
<dbReference type="EC" id="7.6.2.1"/>
<dbReference type="EMBL" id="AY302538">
    <property type="protein sequence ID" value="AAQ19028.1"/>
    <property type="molecule type" value="mRNA"/>
</dbReference>
<dbReference type="EMBL" id="AC004755">
    <property type="protein sequence ID" value="AAC17601.1"/>
    <property type="status" value="ALT_SEQ"/>
    <property type="molecule type" value="Genomic_DNA"/>
</dbReference>
<dbReference type="EMBL" id="AC012615">
    <property type="status" value="NOT_ANNOTATED_CDS"/>
    <property type="molecule type" value="Genomic_DNA"/>
</dbReference>
<dbReference type="EMBL" id="CH471139">
    <property type="protein sequence ID" value="EAW69455.1"/>
    <property type="molecule type" value="Genomic_DNA"/>
</dbReference>
<dbReference type="EMBL" id="AK057452">
    <property type="protein sequence ID" value="BAB71492.1"/>
    <property type="status" value="ALT_INIT"/>
    <property type="molecule type" value="mRNA"/>
</dbReference>
<dbReference type="EMBL" id="BC035162">
    <property type="protein sequence ID" value="AAH35162.3"/>
    <property type="molecule type" value="mRNA"/>
</dbReference>
<dbReference type="CCDS" id="CCDS45901.1">
    <molecule id="O60423-2"/>
</dbReference>
<dbReference type="CCDS" id="CCDS54196.1">
    <molecule id="O60423-3"/>
</dbReference>
<dbReference type="RefSeq" id="NP_001171473.1">
    <molecule id="O60423-3"/>
    <property type="nucleotide sequence ID" value="NM_001178002.3"/>
</dbReference>
<dbReference type="RefSeq" id="NP_620168.1">
    <molecule id="O60423-2"/>
    <property type="nucleotide sequence ID" value="NM_138813.4"/>
</dbReference>
<dbReference type="RefSeq" id="XP_006722717.1">
    <property type="nucleotide sequence ID" value="XM_006722654.2"/>
</dbReference>
<dbReference type="RefSeq" id="XP_006722718.1">
    <property type="nucleotide sequence ID" value="XM_006722655.2"/>
</dbReference>
<dbReference type="SMR" id="O60423"/>
<dbReference type="BioGRID" id="127132">
    <property type="interactions" value="6"/>
</dbReference>
<dbReference type="ComplexPortal" id="CPX-6304">
    <property type="entry name" value="ATP8B3-CDC50A P4-ATPase complex"/>
</dbReference>
<dbReference type="FunCoup" id="O60423">
    <property type="interactions" value="5"/>
</dbReference>
<dbReference type="IntAct" id="O60423">
    <property type="interactions" value="2"/>
</dbReference>
<dbReference type="STRING" id="9606.ENSP00000311336"/>
<dbReference type="GlyGen" id="O60423">
    <property type="glycosylation" value="1 site"/>
</dbReference>
<dbReference type="iPTMnet" id="O60423"/>
<dbReference type="PhosphoSitePlus" id="O60423"/>
<dbReference type="BioMuta" id="ATP8B3"/>
<dbReference type="jPOST" id="O60423"/>
<dbReference type="MassIVE" id="O60423"/>
<dbReference type="PaxDb" id="9606-ENSP00000311336"/>
<dbReference type="PeptideAtlas" id="O60423"/>
<dbReference type="ProteomicsDB" id="49396">
    <molecule id="O60423-2"/>
</dbReference>
<dbReference type="ProteomicsDB" id="49397">
    <molecule id="O60423-1"/>
</dbReference>
<dbReference type="ProteomicsDB" id="49398">
    <molecule id="O60423-3"/>
</dbReference>
<dbReference type="Antibodypedia" id="67630">
    <property type="antibodies" value="55 antibodies from 12 providers"/>
</dbReference>
<dbReference type="DNASU" id="148229"/>
<dbReference type="Ensembl" id="ENST00000310127.10">
    <molecule id="O60423-2"/>
    <property type="protein sequence ID" value="ENSP00000311336.6"/>
    <property type="gene ID" value="ENSG00000130270.16"/>
</dbReference>
<dbReference type="Ensembl" id="ENST00000525591.5">
    <molecule id="O60423-3"/>
    <property type="protein sequence ID" value="ENSP00000437115.1"/>
    <property type="gene ID" value="ENSG00000130270.16"/>
</dbReference>
<dbReference type="GeneID" id="148229"/>
<dbReference type="KEGG" id="hsa:148229"/>
<dbReference type="MANE-Select" id="ENST00000310127.10">
    <property type="protein sequence ID" value="ENSP00000311336.6"/>
    <property type="RefSeq nucleotide sequence ID" value="NM_138813.4"/>
    <property type="RefSeq protein sequence ID" value="NP_620168.1"/>
</dbReference>
<dbReference type="UCSC" id="uc002ltv.5">
    <molecule id="O60423-2"/>
    <property type="organism name" value="human"/>
</dbReference>
<dbReference type="AGR" id="HGNC:13535"/>
<dbReference type="CTD" id="148229"/>
<dbReference type="DisGeNET" id="148229"/>
<dbReference type="GeneCards" id="ATP8B3"/>
<dbReference type="HGNC" id="HGNC:13535">
    <property type="gene designation" value="ATP8B3"/>
</dbReference>
<dbReference type="HPA" id="ENSG00000130270">
    <property type="expression patterns" value="Group enriched (bone marrow, testis)"/>
</dbReference>
<dbReference type="MIM" id="605866">
    <property type="type" value="gene"/>
</dbReference>
<dbReference type="neXtProt" id="NX_O60423"/>
<dbReference type="OpenTargets" id="ENSG00000130270"/>
<dbReference type="PharmGKB" id="PA25168"/>
<dbReference type="VEuPathDB" id="HostDB:ENSG00000130270"/>
<dbReference type="eggNOG" id="KOG0206">
    <property type="taxonomic scope" value="Eukaryota"/>
</dbReference>
<dbReference type="GeneTree" id="ENSGT00940000160463"/>
<dbReference type="HOGENOM" id="CLU_000846_3_2_1"/>
<dbReference type="InParanoid" id="O60423"/>
<dbReference type="OMA" id="DILMFFR"/>
<dbReference type="OrthoDB" id="377733at2759"/>
<dbReference type="PAN-GO" id="O60423">
    <property type="GO annotations" value="5 GO annotations based on evolutionary models"/>
</dbReference>
<dbReference type="PhylomeDB" id="O60423"/>
<dbReference type="TreeFam" id="TF300654"/>
<dbReference type="PathwayCommons" id="O60423"/>
<dbReference type="Reactome" id="R-HSA-936837">
    <property type="pathway name" value="Ion transport by P-type ATPases"/>
</dbReference>
<dbReference type="SignaLink" id="O60423"/>
<dbReference type="BioGRID-ORCS" id="148229">
    <property type="hits" value="18 hits in 1154 CRISPR screens"/>
</dbReference>
<dbReference type="ChiTaRS" id="ATP8B3">
    <property type="organism name" value="human"/>
</dbReference>
<dbReference type="GeneWiki" id="ATP8B3"/>
<dbReference type="GenomeRNAi" id="148229"/>
<dbReference type="Pharos" id="O60423">
    <property type="development level" value="Tdark"/>
</dbReference>
<dbReference type="PRO" id="PR:O60423"/>
<dbReference type="Proteomes" id="UP000005640">
    <property type="component" value="Chromosome 19"/>
</dbReference>
<dbReference type="RNAct" id="O60423">
    <property type="molecule type" value="protein"/>
</dbReference>
<dbReference type="Bgee" id="ENSG00000130270">
    <property type="expression patterns" value="Expressed in left testis and 106 other cell types or tissues"/>
</dbReference>
<dbReference type="ExpressionAtlas" id="O60423">
    <property type="expression patterns" value="baseline and differential"/>
</dbReference>
<dbReference type="GO" id="GO:0002080">
    <property type="term" value="C:acrosomal membrane"/>
    <property type="evidence" value="ECO:0007669"/>
    <property type="project" value="UniProtKB-SubCell"/>
</dbReference>
<dbReference type="GO" id="GO:0005789">
    <property type="term" value="C:endoplasmic reticulum membrane"/>
    <property type="evidence" value="ECO:0007669"/>
    <property type="project" value="UniProtKB-SubCell"/>
</dbReference>
<dbReference type="GO" id="GO:0016020">
    <property type="term" value="C:membrane"/>
    <property type="evidence" value="ECO:0000303"/>
    <property type="project" value="ComplexPortal"/>
</dbReference>
<dbReference type="GO" id="GO:1990531">
    <property type="term" value="C:phospholipid-translocating ATPase complex"/>
    <property type="evidence" value="ECO:0000303"/>
    <property type="project" value="ComplexPortal"/>
</dbReference>
<dbReference type="GO" id="GO:0005886">
    <property type="term" value="C:plasma membrane"/>
    <property type="evidence" value="ECO:0000318"/>
    <property type="project" value="GO_Central"/>
</dbReference>
<dbReference type="GO" id="GO:0005802">
    <property type="term" value="C:trans-Golgi network"/>
    <property type="evidence" value="ECO:0000318"/>
    <property type="project" value="GO_Central"/>
</dbReference>
<dbReference type="GO" id="GO:0005524">
    <property type="term" value="F:ATP binding"/>
    <property type="evidence" value="ECO:0007669"/>
    <property type="project" value="UniProtKB-KW"/>
</dbReference>
<dbReference type="GO" id="GO:0016887">
    <property type="term" value="F:ATP hydrolysis activity"/>
    <property type="evidence" value="ECO:0007669"/>
    <property type="project" value="InterPro"/>
</dbReference>
<dbReference type="GO" id="GO:0140326">
    <property type="term" value="F:ATPase-coupled intramembrane lipid transporter activity"/>
    <property type="evidence" value="ECO:0000318"/>
    <property type="project" value="GO_Central"/>
</dbReference>
<dbReference type="GO" id="GO:0000287">
    <property type="term" value="F:magnesium ion binding"/>
    <property type="evidence" value="ECO:0007669"/>
    <property type="project" value="InterPro"/>
</dbReference>
<dbReference type="GO" id="GO:0090556">
    <property type="term" value="F:phosphatidylserine floppase activity"/>
    <property type="evidence" value="ECO:0007669"/>
    <property type="project" value="RHEA"/>
</dbReference>
<dbReference type="GO" id="GO:0007339">
    <property type="term" value="P:binding of sperm to zona pellucida"/>
    <property type="evidence" value="ECO:0007669"/>
    <property type="project" value="Ensembl"/>
</dbReference>
<dbReference type="GO" id="GO:0051649">
    <property type="term" value="P:establishment of localization in cell"/>
    <property type="evidence" value="ECO:0007669"/>
    <property type="project" value="Ensembl"/>
</dbReference>
<dbReference type="GO" id="GO:0007030">
    <property type="term" value="P:Golgi organization"/>
    <property type="evidence" value="ECO:0000318"/>
    <property type="project" value="GO_Central"/>
</dbReference>
<dbReference type="GO" id="GO:0045332">
    <property type="term" value="P:phospholipid translocation"/>
    <property type="evidence" value="ECO:0000318"/>
    <property type="project" value="GO_Central"/>
</dbReference>
<dbReference type="CDD" id="cd02073">
    <property type="entry name" value="P-type_ATPase_APLT_Dnf-like"/>
    <property type="match status" value="1"/>
</dbReference>
<dbReference type="FunFam" id="3.40.1110.10:FF:000096">
    <property type="entry name" value="Phospholipid-transporting ATPase"/>
    <property type="match status" value="1"/>
</dbReference>
<dbReference type="FunFam" id="3.40.50.1000:FF:000001">
    <property type="entry name" value="Phospholipid-transporting ATPase IC"/>
    <property type="match status" value="1"/>
</dbReference>
<dbReference type="Gene3D" id="3.40.1110.10">
    <property type="entry name" value="Calcium-transporting ATPase, cytoplasmic domain N"/>
    <property type="match status" value="1"/>
</dbReference>
<dbReference type="Gene3D" id="2.70.150.10">
    <property type="entry name" value="Calcium-transporting ATPase, cytoplasmic transduction domain A"/>
    <property type="match status" value="1"/>
</dbReference>
<dbReference type="Gene3D" id="3.40.50.1000">
    <property type="entry name" value="HAD superfamily/HAD-like"/>
    <property type="match status" value="1"/>
</dbReference>
<dbReference type="InterPro" id="IPR023299">
    <property type="entry name" value="ATPase_P-typ_cyto_dom_N"/>
</dbReference>
<dbReference type="InterPro" id="IPR018303">
    <property type="entry name" value="ATPase_P-typ_P_site"/>
</dbReference>
<dbReference type="InterPro" id="IPR023298">
    <property type="entry name" value="ATPase_P-typ_TM_dom_sf"/>
</dbReference>
<dbReference type="InterPro" id="IPR008250">
    <property type="entry name" value="ATPase_P-typ_transduc_dom_A_sf"/>
</dbReference>
<dbReference type="InterPro" id="IPR036412">
    <property type="entry name" value="HAD-like_sf"/>
</dbReference>
<dbReference type="InterPro" id="IPR023214">
    <property type="entry name" value="HAD_sf"/>
</dbReference>
<dbReference type="InterPro" id="IPR006539">
    <property type="entry name" value="P-type_ATPase_IV"/>
</dbReference>
<dbReference type="InterPro" id="IPR032631">
    <property type="entry name" value="P-type_ATPase_N"/>
</dbReference>
<dbReference type="InterPro" id="IPR001757">
    <property type="entry name" value="P_typ_ATPase"/>
</dbReference>
<dbReference type="InterPro" id="IPR032630">
    <property type="entry name" value="P_typ_ATPase_c"/>
</dbReference>
<dbReference type="InterPro" id="IPR044492">
    <property type="entry name" value="P_typ_ATPase_HD_dom"/>
</dbReference>
<dbReference type="NCBIfam" id="TIGR01652">
    <property type="entry name" value="ATPase-Plipid"/>
    <property type="match status" value="1"/>
</dbReference>
<dbReference type="NCBIfam" id="TIGR01494">
    <property type="entry name" value="ATPase_P-type"/>
    <property type="match status" value="1"/>
</dbReference>
<dbReference type="PANTHER" id="PTHR24092:SF78">
    <property type="entry name" value="PHOSPHOLIPID-TRANSPORTING ATPASE IK"/>
    <property type="match status" value="1"/>
</dbReference>
<dbReference type="PANTHER" id="PTHR24092">
    <property type="entry name" value="PROBABLE PHOSPHOLIPID-TRANSPORTING ATPASE"/>
    <property type="match status" value="1"/>
</dbReference>
<dbReference type="Pfam" id="PF13246">
    <property type="entry name" value="Cation_ATPase"/>
    <property type="match status" value="1"/>
</dbReference>
<dbReference type="Pfam" id="PF00702">
    <property type="entry name" value="Hydrolase"/>
    <property type="match status" value="1"/>
</dbReference>
<dbReference type="Pfam" id="PF16212">
    <property type="entry name" value="PhoLip_ATPase_C"/>
    <property type="match status" value="1"/>
</dbReference>
<dbReference type="Pfam" id="PF16209">
    <property type="entry name" value="PhoLip_ATPase_N"/>
    <property type="match status" value="1"/>
</dbReference>
<dbReference type="PRINTS" id="PR00119">
    <property type="entry name" value="CATATPASE"/>
</dbReference>
<dbReference type="SFLD" id="SFLDG00002">
    <property type="entry name" value="C1.7:_P-type_atpase_like"/>
    <property type="match status" value="1"/>
</dbReference>
<dbReference type="SFLD" id="SFLDF00027">
    <property type="entry name" value="p-type_atpase"/>
    <property type="match status" value="1"/>
</dbReference>
<dbReference type="SUPFAM" id="SSF81653">
    <property type="entry name" value="Calcium ATPase, transduction domain A"/>
    <property type="match status" value="1"/>
</dbReference>
<dbReference type="SUPFAM" id="SSF81665">
    <property type="entry name" value="Calcium ATPase, transmembrane domain M"/>
    <property type="match status" value="1"/>
</dbReference>
<dbReference type="SUPFAM" id="SSF56784">
    <property type="entry name" value="HAD-like"/>
    <property type="match status" value="1"/>
</dbReference>
<dbReference type="SUPFAM" id="SSF81660">
    <property type="entry name" value="Metal cation-transporting ATPase, ATP-binding domain N"/>
    <property type="match status" value="1"/>
</dbReference>
<dbReference type="PROSITE" id="PS00154">
    <property type="entry name" value="ATPASE_E1_E2"/>
    <property type="match status" value="1"/>
</dbReference>
<feature type="chain" id="PRO_0000046367" description="Phospholipid-transporting ATPase IK">
    <location>
        <begin position="1"/>
        <end position="1300"/>
    </location>
</feature>
<feature type="topological domain" description="Cytoplasmic" evidence="5">
    <location>
        <begin position="1"/>
        <end position="149"/>
    </location>
</feature>
<feature type="transmembrane region" description="Helical" evidence="5">
    <location>
        <begin position="150"/>
        <end position="171"/>
    </location>
</feature>
<feature type="topological domain" description="Exoplasmic loop" evidence="5">
    <location>
        <begin position="172"/>
        <end position="177"/>
    </location>
</feature>
<feature type="transmembrane region" description="Helical" evidence="5">
    <location>
        <begin position="178"/>
        <end position="197"/>
    </location>
</feature>
<feature type="topological domain" description="Cytoplasmic" evidence="5">
    <location>
        <begin position="198"/>
        <end position="381"/>
    </location>
</feature>
<feature type="transmembrane region" description="Helical" evidence="5">
    <location>
        <begin position="382"/>
        <end position="403"/>
    </location>
</feature>
<feature type="topological domain" description="Exoplasmic loop" evidence="5">
    <location>
        <begin position="404"/>
        <end position="430"/>
    </location>
</feature>
<feature type="transmembrane region" description="Helical" evidence="5">
    <location>
        <begin position="431"/>
        <end position="452"/>
    </location>
</feature>
<feature type="topological domain" description="Cytoplasmic" evidence="5">
    <location>
        <begin position="453"/>
        <end position="995"/>
    </location>
</feature>
<feature type="transmembrane region" description="Helical" evidence="5">
    <location>
        <begin position="996"/>
        <end position="1016"/>
    </location>
</feature>
<feature type="topological domain" description="Exoplasmic loop" evidence="5">
    <location>
        <begin position="1017"/>
        <end position="1028"/>
    </location>
</feature>
<feature type="transmembrane region" description="Helical" evidence="5">
    <location>
        <begin position="1029"/>
        <end position="1048"/>
    </location>
</feature>
<feature type="topological domain" description="Cytoplasmic" evidence="5">
    <location>
        <begin position="1049"/>
        <end position="1078"/>
    </location>
</feature>
<feature type="transmembrane region" description="Helical" evidence="5">
    <location>
        <begin position="1079"/>
        <end position="1100"/>
    </location>
</feature>
<feature type="topological domain" description="Exoplasmic loop" evidence="5">
    <location>
        <begin position="1101"/>
        <end position="1112"/>
    </location>
</feature>
<feature type="transmembrane region" description="Helical" evidence="5">
    <location>
        <begin position="1113"/>
        <end position="1135"/>
    </location>
</feature>
<feature type="topological domain" description="Cytoplasmic" evidence="5">
    <location>
        <begin position="1136"/>
        <end position="1141"/>
    </location>
</feature>
<feature type="transmembrane region" description="Helical" evidence="5">
    <location>
        <begin position="1142"/>
        <end position="1162"/>
    </location>
</feature>
<feature type="topological domain" description="Exoplasmic loop" evidence="5">
    <location>
        <begin position="1163"/>
        <end position="1182"/>
    </location>
</feature>
<feature type="transmembrane region" description="Helical" evidence="5">
    <location>
        <begin position="1183"/>
        <end position="1207"/>
    </location>
</feature>
<feature type="topological domain" description="Cytoplasmic" evidence="5">
    <location>
        <begin position="1208"/>
        <end position="1300"/>
    </location>
</feature>
<feature type="region of interest" description="Disordered" evidence="6">
    <location>
        <begin position="1"/>
        <end position="98"/>
    </location>
</feature>
<feature type="region of interest" description="Disordered" evidence="6">
    <location>
        <begin position="1272"/>
        <end position="1300"/>
    </location>
</feature>
<feature type="compositionally biased region" description="Polar residues" evidence="6">
    <location>
        <begin position="1"/>
        <end position="11"/>
    </location>
</feature>
<feature type="compositionally biased region" description="Basic residues" evidence="6">
    <location>
        <begin position="65"/>
        <end position="74"/>
    </location>
</feature>
<feature type="active site" description="4-aspartylphosphate intermediate" evidence="4">
    <location>
        <position position="495"/>
    </location>
</feature>
<feature type="binding site" evidence="4">
    <location>
        <position position="495"/>
    </location>
    <ligand>
        <name>ATP</name>
        <dbReference type="ChEBI" id="CHEBI:30616"/>
    </ligand>
</feature>
<feature type="binding site" evidence="4">
    <location>
        <position position="495"/>
    </location>
    <ligand>
        <name>Mg(2+)</name>
        <dbReference type="ChEBI" id="CHEBI:18420"/>
    </ligand>
</feature>
<feature type="binding site" evidence="4">
    <location>
        <position position="496"/>
    </location>
    <ligand>
        <name>ATP</name>
        <dbReference type="ChEBI" id="CHEBI:30616"/>
    </ligand>
</feature>
<feature type="binding site" evidence="4">
    <location>
        <position position="497"/>
    </location>
    <ligand>
        <name>ATP</name>
        <dbReference type="ChEBI" id="CHEBI:30616"/>
    </ligand>
</feature>
<feature type="binding site" evidence="4">
    <location>
        <position position="497"/>
    </location>
    <ligand>
        <name>Mg(2+)</name>
        <dbReference type="ChEBI" id="CHEBI:18420"/>
    </ligand>
</feature>
<feature type="binding site" evidence="1">
    <location>
        <position position="596"/>
    </location>
    <ligand>
        <name>ATP</name>
        <dbReference type="ChEBI" id="CHEBI:30616"/>
    </ligand>
</feature>
<feature type="binding site" evidence="4">
    <location>
        <position position="637"/>
    </location>
    <ligand>
        <name>ATP</name>
        <dbReference type="ChEBI" id="CHEBI:30616"/>
    </ligand>
</feature>
<feature type="binding site" evidence="1">
    <location>
        <position position="660"/>
    </location>
    <ligand>
        <name>ATP</name>
        <dbReference type="ChEBI" id="CHEBI:30616"/>
    </ligand>
</feature>
<feature type="binding site" evidence="1">
    <location>
        <position position="693"/>
    </location>
    <ligand>
        <name>ATP</name>
        <dbReference type="ChEBI" id="CHEBI:30616"/>
    </ligand>
</feature>
<feature type="binding site" evidence="1">
    <location>
        <position position="763"/>
    </location>
    <ligand>
        <name>ATP</name>
        <dbReference type="ChEBI" id="CHEBI:30616"/>
    </ligand>
</feature>
<feature type="binding site" evidence="1">
    <location>
        <position position="764"/>
    </location>
    <ligand>
        <name>ATP</name>
        <dbReference type="ChEBI" id="CHEBI:30616"/>
    </ligand>
</feature>
<feature type="binding site" evidence="1">
    <location>
        <position position="765"/>
    </location>
    <ligand>
        <name>ATP</name>
        <dbReference type="ChEBI" id="CHEBI:30616"/>
    </ligand>
</feature>
<feature type="binding site" evidence="1">
    <location>
        <position position="913"/>
    </location>
    <ligand>
        <name>ATP</name>
        <dbReference type="ChEBI" id="CHEBI:30616"/>
    </ligand>
</feature>
<feature type="binding site" evidence="1">
    <location>
        <position position="919"/>
    </location>
    <ligand>
        <name>ATP</name>
        <dbReference type="ChEBI" id="CHEBI:30616"/>
    </ligand>
</feature>
<feature type="binding site" evidence="4">
    <location>
        <position position="939"/>
    </location>
    <ligand>
        <name>Mg(2+)</name>
        <dbReference type="ChEBI" id="CHEBI:18420"/>
    </ligand>
</feature>
<feature type="binding site" evidence="4">
    <location>
        <position position="942"/>
    </location>
    <ligand>
        <name>ATP</name>
        <dbReference type="ChEBI" id="CHEBI:30616"/>
    </ligand>
</feature>
<feature type="binding site" evidence="4">
    <location>
        <position position="943"/>
    </location>
    <ligand>
        <name>ATP</name>
        <dbReference type="ChEBI" id="CHEBI:30616"/>
    </ligand>
</feature>
<feature type="binding site" evidence="3">
    <location>
        <position position="943"/>
    </location>
    <ligand>
        <name>Mg(2+)</name>
        <dbReference type="ChEBI" id="CHEBI:18420"/>
    </ligand>
</feature>
<feature type="splice variant" id="VSP_043554" description="In isoform 3." evidence="9">
    <location>
        <begin position="1"/>
        <end position="53"/>
    </location>
</feature>
<feature type="splice variant" id="VSP_043555" description="In isoform 3." evidence="9">
    <original>A</original>
    <variation>ADGYMFV</variation>
    <location>
        <position position="354"/>
    </location>
</feature>
<feature type="splice variant" id="VSP_039716" description="In isoform 2 and isoform 3." evidence="9">
    <original>Q</original>
    <variation>QVYNEMEQDLR</variation>
    <location>
        <position position="730"/>
    </location>
</feature>
<feature type="sequence variant" id="VAR_055544" description="In dbSNP:rs7250872.">
    <original>G</original>
    <variation>R</variation>
    <location>
        <position position="45"/>
    </location>
</feature>
<feature type="sequence variant" id="VAR_055545" description="In dbSNP:rs8100856.">
    <original>V</original>
    <variation>I</variation>
    <location>
        <position position="618"/>
    </location>
</feature>
<comment type="function">
    <text evidence="2">P4-ATPase flippase which catalyzes the hydrolysis of ATP coupled to the transport of aminophospholipids from the outer to the inner leaflet of various membranes and ensures the maintenance of asymmetric distribution of phospholipids. Phospholipid translocation also seems to be implicated in vesicle formation and in uptake of lipid signaling molecules. May be responsible for the maintenance of asymmetric distribution of phosphatidylserine (PS) in spermatozoa membranes. Involved in acrosome reactions and binding of spermatozoa to zona pellucida.</text>
</comment>
<comment type="catalytic activity">
    <reaction evidence="2">
        <text>ATP + H2O + phospholipidSide 1 = ADP + phosphate + phospholipidSide 2.</text>
        <dbReference type="EC" id="7.6.2.1"/>
    </reaction>
</comment>
<comment type="catalytic activity">
    <reaction evidence="2">
        <text>a 1,2-diacyl-sn-glycero-3-phospho-L-serine(out) + ATP + H2O = a 1,2-diacyl-sn-glycero-3-phospho-L-serine(in) + ADP + phosphate + H(+)</text>
        <dbReference type="Rhea" id="RHEA:38567"/>
        <dbReference type="ChEBI" id="CHEBI:15377"/>
        <dbReference type="ChEBI" id="CHEBI:15378"/>
        <dbReference type="ChEBI" id="CHEBI:30616"/>
        <dbReference type="ChEBI" id="CHEBI:43474"/>
        <dbReference type="ChEBI" id="CHEBI:57262"/>
        <dbReference type="ChEBI" id="CHEBI:456216"/>
    </reaction>
    <physiologicalReaction direction="left-to-right" evidence="2">
        <dbReference type="Rhea" id="RHEA:38568"/>
    </physiologicalReaction>
</comment>
<comment type="cofactor">
    <cofactor evidence="4">
        <name>Mg(2+)</name>
        <dbReference type="ChEBI" id="CHEBI:18420"/>
    </cofactor>
</comment>
<comment type="subcellular location">
    <subcellularLocation>
        <location evidence="2">Cytoplasmic vesicle</location>
        <location evidence="2">Secretory vesicle</location>
        <location evidence="2">Acrosome membrane</location>
        <topology evidence="5">Multi-pass membrane protein</topology>
    </subcellularLocation>
    <subcellularLocation>
        <location evidence="8">Endoplasmic reticulum membrane</location>
        <topology evidence="5">Multi-pass membrane protein</topology>
    </subcellularLocation>
</comment>
<comment type="alternative products">
    <event type="alternative splicing"/>
    <isoform>
        <id>O60423-2</id>
        <name>1</name>
        <sequence type="displayed"/>
    </isoform>
    <isoform>
        <id>O60423-1</id>
        <name>2</name>
        <sequence type="described" ref="VSP_039716"/>
    </isoform>
    <isoform>
        <id>O60423-3</id>
        <name>3</name>
        <sequence type="described" ref="VSP_043554 VSP_043555 VSP_039716"/>
    </isoform>
</comment>
<comment type="tissue specificity">
    <text evidence="7">Isoform 3 was only detected in testis.</text>
</comment>
<comment type="miscellaneous">
    <text evidence="11">Association with flippase complex beta subunits TMEM30A and TMEM30A has not been detected, neither did their coexpression change the localization in ER.</text>
</comment>
<comment type="similarity">
    <text evidence="10">Belongs to the cation transport ATPase (P-type) (TC 3.A.3) family. Type IV subfamily.</text>
</comment>
<comment type="sequence caution" evidence="10">
    <conflict type="erroneous gene model prediction">
        <sequence resource="EMBL-CDS" id="AAC17601"/>
    </conflict>
</comment>
<comment type="sequence caution" evidence="10">
    <conflict type="erroneous initiation">
        <sequence resource="EMBL-CDS" id="BAB71492"/>
    </conflict>
</comment>
<organism>
    <name type="scientific">Homo sapiens</name>
    <name type="common">Human</name>
    <dbReference type="NCBI Taxonomy" id="9606"/>
    <lineage>
        <taxon>Eukaryota</taxon>
        <taxon>Metazoa</taxon>
        <taxon>Chordata</taxon>
        <taxon>Craniata</taxon>
        <taxon>Vertebrata</taxon>
        <taxon>Euteleostomi</taxon>
        <taxon>Mammalia</taxon>
        <taxon>Eutheria</taxon>
        <taxon>Euarchontoglires</taxon>
        <taxon>Primates</taxon>
        <taxon>Haplorrhini</taxon>
        <taxon>Catarrhini</taxon>
        <taxon>Hominidae</taxon>
        <taxon>Homo</taxon>
    </lineage>
</organism>
<evidence type="ECO:0000250" key="1">
    <source>
        <dbReference type="UniProtKB" id="P04191"/>
    </source>
</evidence>
<evidence type="ECO:0000250" key="2">
    <source>
        <dbReference type="UniProtKB" id="Q6UQ17"/>
    </source>
</evidence>
<evidence type="ECO:0000250" key="3">
    <source>
        <dbReference type="UniProtKB" id="Q8NB49"/>
    </source>
</evidence>
<evidence type="ECO:0000250" key="4">
    <source>
        <dbReference type="UniProtKB" id="Q9Y2Q0"/>
    </source>
</evidence>
<evidence type="ECO:0000255" key="5"/>
<evidence type="ECO:0000256" key="6">
    <source>
        <dbReference type="SAM" id="MobiDB-lite"/>
    </source>
</evidence>
<evidence type="ECO:0000269" key="7">
    <source>
    </source>
</evidence>
<evidence type="ECO:0000269" key="8">
    <source>
    </source>
</evidence>
<evidence type="ECO:0000303" key="9">
    <source>
    </source>
</evidence>
<evidence type="ECO:0000305" key="10"/>
<evidence type="ECO:0000305" key="11">
    <source>
    </source>
</evidence>
<evidence type="ECO:0000312" key="12">
    <source>
        <dbReference type="HGNC" id="HGNC:13535"/>
    </source>
</evidence>
<sequence length="1300" mass="146752">MGTGPAQTPRSTRAGPEPSPAPPGPGDTGDSDVTQEGSGPAGIRGGETVIRAGMGDSPGRGAPERRHKAQPGRARKYEWRPEGPTSMGSLGQREDLQDEDRNSAFTWKVQANNRAYNGQFKEKVILCWQRKKYKTNVIRTAKYNFYSFLPLNLYEQFHRVSNLFFLIIIILQSIPDISTLPWFSLSTPMVCLLFIRATRDLVDDMGRHKSDRAINNRPCQILMGKSFKQKKWQDLCVGDVVCLRKDNIVPADMLLLASTEPSSLCYVETVDIDGETNLKFRQALMVTHKELATIKKMASFQGTVTCEAPNSRMHHFVGCLEWNDKKYSLDIGNLLLRGCRIRNTDTCYGLVIYAGFDTKIMKNCGKIHLKRTKLDLLMNKLVVVIFISVVLVCLVLAFGFGFSVKEFKDHHYYLSGVHGSSVAAESFFVFWSFLILLSVTIPMSMFILSEFIYLGNSVFIDWDVQMYYKPQDVPAKARSTSLNDHLGQVEYIFSDKTGTLTQNILTFNKCCISGRVYGPDSEATTRPKENPYLWNKFADGKLLFHNAALLHLVRTNGDEAVREFWRLLAICHTVMVRESPRERPDQLLYQAASPDEGALVTAARNFGYVFLSRTQDTVTIMELGEERVYQVLAIMDFNSTRKRMSVLVRKPEGAICLYTKGADTVIFERLHRRGAMEFATEEALAAFAQETLRTLCLAYREVAEDIYEDWQQRHQEASLLLQNRAQALQQLLGATAIEDRLQDGVPETIKCLKKSNIKIWVLTGDKQETAVNIGFACELLSENMLILEEKEISRILETYWENSNNLLTRESLSQVKLALVINGDFLDKLLVSLRKEPRALAQNVNMDEAWQELGQSRRDFLYARRLSLLCRRFGLPLAAPPAQDSRARRSSEVLQERAFVDLASKCQAVICCRVTPKQKALIVALVKKYHQVVTLAIGDGANDINMIKTADVGVGLAGQEGMQAVQNSDFVLGQFCFLQRLLLVHGRWSYVRICKFLRYFFYKSMASMMVQVWFACYNGFTGQPLYEGWFLALFNLLYSTLPVLYIGLFEQDVSAEQSLEKPELYVVGQKDELFNYWVFVQAIAHGVTTSLVNFFMTLWISRDTAGPASFSDHQSFAVVVALSCLLSITMEVILIIKYWTALCVATILLSLGFYAIMTTTTQSFWLFRVSPTTFPFLYADLSVMSSPSILLVVLLSVSINTFPVLALRVIFPALKELRAKEEKVEEGPSEEIFTMEPLPHVHRESRARRSSYAFSHREGYANLITQGTILRRGPGVSSDIASESLDPSDEEAASSPKESQ</sequence>
<accession>O60423</accession>
<accession>Q7Z485</accession>
<accession>Q8IVB8</accession>
<accession>Q8N4Y8</accession>
<accession>Q96M22</accession>
<name>AT8B3_HUMAN</name>
<proteinExistence type="evidence at protein level"/>
<reference key="1">
    <citation type="journal article" date="2003" name="Biochim. Biophys. Acta">
        <title>FIC1, a P-type ATPase linked to cholestatic liver disease, has homologues (ATP8B2 and ATP8B3) expressed throughout the body.</title>
        <authorList>
            <person name="Harris M.J."/>
            <person name="Arias I.M."/>
        </authorList>
    </citation>
    <scope>NUCLEOTIDE SEQUENCE [MRNA] (ISOFORM 3)</scope>
    <scope>TISSUE SPECIFICITY</scope>
</reference>
<reference key="2">
    <citation type="journal article" date="2004" name="Nature">
        <title>The DNA sequence and biology of human chromosome 19.</title>
        <authorList>
            <person name="Grimwood J."/>
            <person name="Gordon L.A."/>
            <person name="Olsen A.S."/>
            <person name="Terry A."/>
            <person name="Schmutz J."/>
            <person name="Lamerdin J.E."/>
            <person name="Hellsten U."/>
            <person name="Goodstein D."/>
            <person name="Couronne O."/>
            <person name="Tran-Gyamfi M."/>
            <person name="Aerts A."/>
            <person name="Altherr M."/>
            <person name="Ashworth L."/>
            <person name="Bajorek E."/>
            <person name="Black S."/>
            <person name="Branscomb E."/>
            <person name="Caenepeel S."/>
            <person name="Carrano A.V."/>
            <person name="Caoile C."/>
            <person name="Chan Y.M."/>
            <person name="Christensen M."/>
            <person name="Cleland C.A."/>
            <person name="Copeland A."/>
            <person name="Dalin E."/>
            <person name="Dehal P."/>
            <person name="Denys M."/>
            <person name="Detter J.C."/>
            <person name="Escobar J."/>
            <person name="Flowers D."/>
            <person name="Fotopulos D."/>
            <person name="Garcia C."/>
            <person name="Georgescu A.M."/>
            <person name="Glavina T."/>
            <person name="Gomez M."/>
            <person name="Gonzales E."/>
            <person name="Groza M."/>
            <person name="Hammon N."/>
            <person name="Hawkins T."/>
            <person name="Haydu L."/>
            <person name="Ho I."/>
            <person name="Huang W."/>
            <person name="Israni S."/>
            <person name="Jett J."/>
            <person name="Kadner K."/>
            <person name="Kimball H."/>
            <person name="Kobayashi A."/>
            <person name="Larionov V."/>
            <person name="Leem S.-H."/>
            <person name="Lopez F."/>
            <person name="Lou Y."/>
            <person name="Lowry S."/>
            <person name="Malfatti S."/>
            <person name="Martinez D."/>
            <person name="McCready P.M."/>
            <person name="Medina C."/>
            <person name="Morgan J."/>
            <person name="Nelson K."/>
            <person name="Nolan M."/>
            <person name="Ovcharenko I."/>
            <person name="Pitluck S."/>
            <person name="Pollard M."/>
            <person name="Popkie A.P."/>
            <person name="Predki P."/>
            <person name="Quan G."/>
            <person name="Ramirez L."/>
            <person name="Rash S."/>
            <person name="Retterer J."/>
            <person name="Rodriguez A."/>
            <person name="Rogers S."/>
            <person name="Salamov A."/>
            <person name="Salazar A."/>
            <person name="She X."/>
            <person name="Smith D."/>
            <person name="Slezak T."/>
            <person name="Solovyev V."/>
            <person name="Thayer N."/>
            <person name="Tice H."/>
            <person name="Tsai M."/>
            <person name="Ustaszewska A."/>
            <person name="Vo N."/>
            <person name="Wagner M."/>
            <person name="Wheeler J."/>
            <person name="Wu K."/>
            <person name="Xie G."/>
            <person name="Yang J."/>
            <person name="Dubchak I."/>
            <person name="Furey T.S."/>
            <person name="DeJong P."/>
            <person name="Dickson M."/>
            <person name="Gordon D."/>
            <person name="Eichler E.E."/>
            <person name="Pennacchio L.A."/>
            <person name="Richardson P."/>
            <person name="Stubbs L."/>
            <person name="Rokhsar D.S."/>
            <person name="Myers R.M."/>
            <person name="Rubin E.M."/>
            <person name="Lucas S.M."/>
        </authorList>
    </citation>
    <scope>NUCLEOTIDE SEQUENCE [LARGE SCALE GENOMIC DNA]</scope>
</reference>
<reference key="3">
    <citation type="submission" date="2005-09" db="EMBL/GenBank/DDBJ databases">
        <authorList>
            <person name="Mural R.J."/>
            <person name="Istrail S."/>
            <person name="Sutton G."/>
            <person name="Florea L."/>
            <person name="Halpern A.L."/>
            <person name="Mobarry C.M."/>
            <person name="Lippert R."/>
            <person name="Walenz B."/>
            <person name="Shatkay H."/>
            <person name="Dew I."/>
            <person name="Miller J.R."/>
            <person name="Flanigan M.J."/>
            <person name="Edwards N.J."/>
            <person name="Bolanos R."/>
            <person name="Fasulo D."/>
            <person name="Halldorsson B.V."/>
            <person name="Hannenhalli S."/>
            <person name="Turner R."/>
            <person name="Yooseph S."/>
            <person name="Lu F."/>
            <person name="Nusskern D.R."/>
            <person name="Shue B.C."/>
            <person name="Zheng X.H."/>
            <person name="Zhong F."/>
            <person name="Delcher A.L."/>
            <person name="Huson D.H."/>
            <person name="Kravitz S.A."/>
            <person name="Mouchard L."/>
            <person name="Reinert K."/>
            <person name="Remington K.A."/>
            <person name="Clark A.G."/>
            <person name="Waterman M.S."/>
            <person name="Eichler E.E."/>
            <person name="Adams M.D."/>
            <person name="Hunkapiller M.W."/>
            <person name="Myers E.W."/>
            <person name="Venter J.C."/>
        </authorList>
    </citation>
    <scope>NUCLEOTIDE SEQUENCE [LARGE SCALE GENOMIC DNA]</scope>
</reference>
<reference key="4">
    <citation type="journal article" date="2004" name="Genome Res.">
        <title>The status, quality, and expansion of the NIH full-length cDNA project: the Mammalian Gene Collection (MGC).</title>
        <authorList>
            <consortium name="The MGC Project Team"/>
        </authorList>
    </citation>
    <scope>NUCLEOTIDE SEQUENCE [LARGE SCALE MRNA] (ISOFORM 1)</scope>
    <source>
        <tissue>Eye</tissue>
        <tissue>Testis</tissue>
    </source>
</reference>
<reference key="5">
    <citation type="journal article" date="2004" name="Nat. Genet.">
        <title>Complete sequencing and characterization of 21,243 full-length human cDNAs.</title>
        <authorList>
            <person name="Ota T."/>
            <person name="Suzuki Y."/>
            <person name="Nishikawa T."/>
            <person name="Otsuki T."/>
            <person name="Sugiyama T."/>
            <person name="Irie R."/>
            <person name="Wakamatsu A."/>
            <person name="Hayashi K."/>
            <person name="Sato H."/>
            <person name="Nagai K."/>
            <person name="Kimura K."/>
            <person name="Makita H."/>
            <person name="Sekine M."/>
            <person name="Obayashi M."/>
            <person name="Nishi T."/>
            <person name="Shibahara T."/>
            <person name="Tanaka T."/>
            <person name="Ishii S."/>
            <person name="Yamamoto J."/>
            <person name="Saito K."/>
            <person name="Kawai Y."/>
            <person name="Isono Y."/>
            <person name="Nakamura Y."/>
            <person name="Nagahari K."/>
            <person name="Murakami K."/>
            <person name="Yasuda T."/>
            <person name="Iwayanagi T."/>
            <person name="Wagatsuma M."/>
            <person name="Shiratori A."/>
            <person name="Sudo H."/>
            <person name="Hosoiri T."/>
            <person name="Kaku Y."/>
            <person name="Kodaira H."/>
            <person name="Kondo H."/>
            <person name="Sugawara M."/>
            <person name="Takahashi M."/>
            <person name="Kanda K."/>
            <person name="Yokoi T."/>
            <person name="Furuya T."/>
            <person name="Kikkawa E."/>
            <person name="Omura Y."/>
            <person name="Abe K."/>
            <person name="Kamihara K."/>
            <person name="Katsuta N."/>
            <person name="Sato K."/>
            <person name="Tanikawa M."/>
            <person name="Yamazaki M."/>
            <person name="Ninomiya K."/>
            <person name="Ishibashi T."/>
            <person name="Yamashita H."/>
            <person name="Murakawa K."/>
            <person name="Fujimori K."/>
            <person name="Tanai H."/>
            <person name="Kimata M."/>
            <person name="Watanabe M."/>
            <person name="Hiraoka S."/>
            <person name="Chiba Y."/>
            <person name="Ishida S."/>
            <person name="Ono Y."/>
            <person name="Takiguchi S."/>
            <person name="Watanabe S."/>
            <person name="Yosida M."/>
            <person name="Hotuta T."/>
            <person name="Kusano J."/>
            <person name="Kanehori K."/>
            <person name="Takahashi-Fujii A."/>
            <person name="Hara H."/>
            <person name="Tanase T.-O."/>
            <person name="Nomura Y."/>
            <person name="Togiya S."/>
            <person name="Komai F."/>
            <person name="Hara R."/>
            <person name="Takeuchi K."/>
            <person name="Arita M."/>
            <person name="Imose N."/>
            <person name="Musashino K."/>
            <person name="Yuuki H."/>
            <person name="Oshima A."/>
            <person name="Sasaki N."/>
            <person name="Aotsuka S."/>
            <person name="Yoshikawa Y."/>
            <person name="Matsunawa H."/>
            <person name="Ichihara T."/>
            <person name="Shiohata N."/>
            <person name="Sano S."/>
            <person name="Moriya S."/>
            <person name="Momiyama H."/>
            <person name="Satoh N."/>
            <person name="Takami S."/>
            <person name="Terashima Y."/>
            <person name="Suzuki O."/>
            <person name="Nakagawa S."/>
            <person name="Senoh A."/>
            <person name="Mizoguchi H."/>
            <person name="Goto Y."/>
            <person name="Shimizu F."/>
            <person name="Wakebe H."/>
            <person name="Hishigaki H."/>
            <person name="Watanabe T."/>
            <person name="Sugiyama A."/>
            <person name="Takemoto M."/>
            <person name="Kawakami B."/>
            <person name="Yamazaki M."/>
            <person name="Watanabe K."/>
            <person name="Kumagai A."/>
            <person name="Itakura S."/>
            <person name="Fukuzumi Y."/>
            <person name="Fujimori Y."/>
            <person name="Komiyama M."/>
            <person name="Tashiro H."/>
            <person name="Tanigami A."/>
            <person name="Fujiwara T."/>
            <person name="Ono T."/>
            <person name="Yamada K."/>
            <person name="Fujii Y."/>
            <person name="Ozaki K."/>
            <person name="Hirao M."/>
            <person name="Ohmori Y."/>
            <person name="Kawabata A."/>
            <person name="Hikiji T."/>
            <person name="Kobatake N."/>
            <person name="Inagaki H."/>
            <person name="Ikema Y."/>
            <person name="Okamoto S."/>
            <person name="Okitani R."/>
            <person name="Kawakami T."/>
            <person name="Noguchi S."/>
            <person name="Itoh T."/>
            <person name="Shigeta K."/>
            <person name="Senba T."/>
            <person name="Matsumura K."/>
            <person name="Nakajima Y."/>
            <person name="Mizuno T."/>
            <person name="Morinaga M."/>
            <person name="Sasaki M."/>
            <person name="Togashi T."/>
            <person name="Oyama M."/>
            <person name="Hata H."/>
            <person name="Watanabe M."/>
            <person name="Komatsu T."/>
            <person name="Mizushima-Sugano J."/>
            <person name="Satoh T."/>
            <person name="Shirai Y."/>
            <person name="Takahashi Y."/>
            <person name="Nakagawa K."/>
            <person name="Okumura K."/>
            <person name="Nagase T."/>
            <person name="Nomura N."/>
            <person name="Kikuchi H."/>
            <person name="Masuho Y."/>
            <person name="Yamashita R."/>
            <person name="Nakai K."/>
            <person name="Yada T."/>
            <person name="Nakamura Y."/>
            <person name="Ohara O."/>
            <person name="Isogai T."/>
            <person name="Sugano S."/>
        </authorList>
    </citation>
    <scope>NUCLEOTIDE SEQUENCE [LARGE SCALE MRNA] OF 968-1300</scope>
    <source>
        <tissue>Testis</tissue>
    </source>
</reference>
<reference key="6">
    <citation type="journal article" date="2010" name="J. Biol. Chem.">
        <title>Heteromeric interactions required for abundance and subcellular localization of human CDC50 proteins and class 1 P4-ATPases.</title>
        <authorList>
            <person name="van der Velden L.M."/>
            <person name="Wichers C.G."/>
            <person name="van Breevoort A.E."/>
            <person name="Coleman J.A."/>
            <person name="Molday R.S."/>
            <person name="Berger R."/>
            <person name="Klomp L.W."/>
            <person name="van de Graaf S.F."/>
        </authorList>
    </citation>
    <scope>SUBCELLULAR LOCATION</scope>
</reference>
<keyword id="KW-0025">Alternative splicing</keyword>
<keyword id="KW-0067">ATP-binding</keyword>
<keyword id="KW-0968">Cytoplasmic vesicle</keyword>
<keyword id="KW-0256">Endoplasmic reticulum</keyword>
<keyword id="KW-0445">Lipid transport</keyword>
<keyword id="KW-0460">Magnesium</keyword>
<keyword id="KW-0472">Membrane</keyword>
<keyword id="KW-0479">Metal-binding</keyword>
<keyword id="KW-0547">Nucleotide-binding</keyword>
<keyword id="KW-1267">Proteomics identification</keyword>
<keyword id="KW-1185">Reference proteome</keyword>
<keyword id="KW-1278">Translocase</keyword>
<keyword id="KW-0812">Transmembrane</keyword>
<keyword id="KW-1133">Transmembrane helix</keyword>
<keyword id="KW-0813">Transport</keyword>
<protein>
    <recommendedName>
        <fullName evidence="10">Phospholipid-transporting ATPase IK</fullName>
        <ecNumber>7.6.2.1</ecNumber>
    </recommendedName>
    <alternativeName>
        <fullName>ATPase class I type 8B member 3</fullName>
    </alternativeName>
</protein>